<name>RS153_ARATH</name>
<accession>Q9FY65</accession>
<gene>
    <name type="primary">RPS15C</name>
    <name type="ordered locus">At5g09500</name>
    <name type="ORF">T5E8_300</name>
</gene>
<dbReference type="EMBL" id="AL391712">
    <property type="protein sequence ID" value="CAC05476.1"/>
    <property type="molecule type" value="Genomic_DNA"/>
</dbReference>
<dbReference type="EMBL" id="CP002688">
    <property type="protein sequence ID" value="AED91403.1"/>
    <property type="molecule type" value="Genomic_DNA"/>
</dbReference>
<dbReference type="EMBL" id="BT010135">
    <property type="protein sequence ID" value="AAQ22604.1"/>
    <property type="molecule type" value="mRNA"/>
</dbReference>
<dbReference type="RefSeq" id="NP_196512.1">
    <property type="nucleotide sequence ID" value="NM_120987.3"/>
</dbReference>
<dbReference type="SMR" id="Q9FY65"/>
<dbReference type="BioGRID" id="16087">
    <property type="interactions" value="87"/>
</dbReference>
<dbReference type="FunCoup" id="Q9FY65">
    <property type="interactions" value="2755"/>
</dbReference>
<dbReference type="STRING" id="3702.Q9FY65"/>
<dbReference type="MetOSite" id="Q9FY65"/>
<dbReference type="PaxDb" id="3702-AT5G09500.1"/>
<dbReference type="ProteomicsDB" id="226910"/>
<dbReference type="EnsemblPlants" id="AT5G09500.1">
    <property type="protein sequence ID" value="AT5G09500.1"/>
    <property type="gene ID" value="AT5G09500"/>
</dbReference>
<dbReference type="GeneID" id="830809"/>
<dbReference type="Gramene" id="AT5G09500.1">
    <property type="protein sequence ID" value="AT5G09500.1"/>
    <property type="gene ID" value="AT5G09500"/>
</dbReference>
<dbReference type="KEGG" id="ath:AT5G09500"/>
<dbReference type="Araport" id="AT5G09500"/>
<dbReference type="TAIR" id="AT5G09500"/>
<dbReference type="eggNOG" id="KOG0898">
    <property type="taxonomic scope" value="Eukaryota"/>
</dbReference>
<dbReference type="HOGENOM" id="CLU_097347_1_0_1"/>
<dbReference type="InParanoid" id="Q9FY65"/>
<dbReference type="OMA" id="CNIISHI"/>
<dbReference type="PhylomeDB" id="Q9FY65"/>
<dbReference type="PRO" id="PR:Q9FY65"/>
<dbReference type="Proteomes" id="UP000006548">
    <property type="component" value="Chromosome 5"/>
</dbReference>
<dbReference type="ExpressionAtlas" id="Q9FY65">
    <property type="expression patterns" value="baseline and differential"/>
</dbReference>
<dbReference type="GO" id="GO:0022627">
    <property type="term" value="C:cytosolic small ribosomal subunit"/>
    <property type="evidence" value="ECO:0007005"/>
    <property type="project" value="TAIR"/>
</dbReference>
<dbReference type="GO" id="GO:0003723">
    <property type="term" value="F:RNA binding"/>
    <property type="evidence" value="ECO:0007669"/>
    <property type="project" value="InterPro"/>
</dbReference>
<dbReference type="GO" id="GO:0003735">
    <property type="term" value="F:structural constituent of ribosome"/>
    <property type="evidence" value="ECO:0000314"/>
    <property type="project" value="CAFA"/>
</dbReference>
<dbReference type="GO" id="GO:0006412">
    <property type="term" value="P:translation"/>
    <property type="evidence" value="ECO:0007669"/>
    <property type="project" value="InterPro"/>
</dbReference>
<dbReference type="FunFam" id="3.30.860.10:FF:000002">
    <property type="entry name" value="40S ribosomal protein S15"/>
    <property type="match status" value="1"/>
</dbReference>
<dbReference type="Gene3D" id="3.30.860.10">
    <property type="entry name" value="30s Ribosomal Protein S19, Chain A"/>
    <property type="match status" value="1"/>
</dbReference>
<dbReference type="HAMAP" id="MF_00531">
    <property type="entry name" value="Ribosomal_uS19"/>
    <property type="match status" value="1"/>
</dbReference>
<dbReference type="InterPro" id="IPR002222">
    <property type="entry name" value="Ribosomal_uS19"/>
</dbReference>
<dbReference type="InterPro" id="IPR020934">
    <property type="entry name" value="Ribosomal_uS19_CS"/>
</dbReference>
<dbReference type="InterPro" id="IPR005713">
    <property type="entry name" value="Ribosomal_uS19_euk/arc"/>
</dbReference>
<dbReference type="InterPro" id="IPR023575">
    <property type="entry name" value="Ribosomal_uS19_SF"/>
</dbReference>
<dbReference type="NCBIfam" id="NF003121">
    <property type="entry name" value="PRK04038.1"/>
    <property type="match status" value="1"/>
</dbReference>
<dbReference type="NCBIfam" id="TIGR01025">
    <property type="entry name" value="uS19_arch"/>
    <property type="match status" value="1"/>
</dbReference>
<dbReference type="PANTHER" id="PTHR11880">
    <property type="entry name" value="RIBOSOMAL PROTEIN S19P FAMILY MEMBER"/>
    <property type="match status" value="1"/>
</dbReference>
<dbReference type="PANTHER" id="PTHR11880:SF41">
    <property type="entry name" value="SMALL RIBOSOMAL SUBUNIT PROTEIN US19Y"/>
    <property type="match status" value="1"/>
</dbReference>
<dbReference type="Pfam" id="PF00203">
    <property type="entry name" value="Ribosomal_S19"/>
    <property type="match status" value="1"/>
</dbReference>
<dbReference type="PIRSF" id="PIRSF002144">
    <property type="entry name" value="Ribosomal_S19"/>
    <property type="match status" value="1"/>
</dbReference>
<dbReference type="PRINTS" id="PR00975">
    <property type="entry name" value="RIBOSOMALS19"/>
</dbReference>
<dbReference type="SUPFAM" id="SSF54570">
    <property type="entry name" value="Ribosomal protein S19"/>
    <property type="match status" value="1"/>
</dbReference>
<dbReference type="PROSITE" id="PS00323">
    <property type="entry name" value="RIBOSOMAL_S19"/>
    <property type="match status" value="1"/>
</dbReference>
<protein>
    <recommendedName>
        <fullName evidence="1">Small ribosomal subunit protein uS19y</fullName>
    </recommendedName>
    <alternativeName>
        <fullName>40S ribosomal protein S15-3</fullName>
    </alternativeName>
</protein>
<feature type="chain" id="PRO_0000130041" description="Small ribosomal subunit protein uS19y">
    <location>
        <begin position="1"/>
        <end position="150"/>
    </location>
</feature>
<sequence length="150" mass="16750">MADPEVAAAGIVKKRTFKKFSFRGVDLDALLDMSTDDLVKLFPSRIRRRFSRGLTRKPMALIKKLRKAKIEAPAGEKPAAVRTHLRNMIIVPEMIGSVIGVYNGKTFNQVEIKPEMIGHYLAEFSISYKPVKHGRPGVGATNSSRFIPLK</sequence>
<proteinExistence type="evidence at transcript level"/>
<organism>
    <name type="scientific">Arabidopsis thaliana</name>
    <name type="common">Mouse-ear cress</name>
    <dbReference type="NCBI Taxonomy" id="3702"/>
    <lineage>
        <taxon>Eukaryota</taxon>
        <taxon>Viridiplantae</taxon>
        <taxon>Streptophyta</taxon>
        <taxon>Embryophyta</taxon>
        <taxon>Tracheophyta</taxon>
        <taxon>Spermatophyta</taxon>
        <taxon>Magnoliopsida</taxon>
        <taxon>eudicotyledons</taxon>
        <taxon>Gunneridae</taxon>
        <taxon>Pentapetalae</taxon>
        <taxon>rosids</taxon>
        <taxon>malvids</taxon>
        <taxon>Brassicales</taxon>
        <taxon>Brassicaceae</taxon>
        <taxon>Camelineae</taxon>
        <taxon>Arabidopsis</taxon>
    </lineage>
</organism>
<reference key="1">
    <citation type="journal article" date="2000" name="Nature">
        <title>Sequence and analysis of chromosome 5 of the plant Arabidopsis thaliana.</title>
        <authorList>
            <person name="Tabata S."/>
            <person name="Kaneko T."/>
            <person name="Nakamura Y."/>
            <person name="Kotani H."/>
            <person name="Kato T."/>
            <person name="Asamizu E."/>
            <person name="Miyajima N."/>
            <person name="Sasamoto S."/>
            <person name="Kimura T."/>
            <person name="Hosouchi T."/>
            <person name="Kawashima K."/>
            <person name="Kohara M."/>
            <person name="Matsumoto M."/>
            <person name="Matsuno A."/>
            <person name="Muraki A."/>
            <person name="Nakayama S."/>
            <person name="Nakazaki N."/>
            <person name="Naruo K."/>
            <person name="Okumura S."/>
            <person name="Shinpo S."/>
            <person name="Takeuchi C."/>
            <person name="Wada T."/>
            <person name="Watanabe A."/>
            <person name="Yamada M."/>
            <person name="Yasuda M."/>
            <person name="Sato S."/>
            <person name="de la Bastide M."/>
            <person name="Huang E."/>
            <person name="Spiegel L."/>
            <person name="Gnoj L."/>
            <person name="O'Shaughnessy A."/>
            <person name="Preston R."/>
            <person name="Habermann K."/>
            <person name="Murray J."/>
            <person name="Johnson D."/>
            <person name="Rohlfing T."/>
            <person name="Nelson J."/>
            <person name="Stoneking T."/>
            <person name="Pepin K."/>
            <person name="Spieth J."/>
            <person name="Sekhon M."/>
            <person name="Armstrong J."/>
            <person name="Becker M."/>
            <person name="Belter E."/>
            <person name="Cordum H."/>
            <person name="Cordes M."/>
            <person name="Courtney L."/>
            <person name="Courtney W."/>
            <person name="Dante M."/>
            <person name="Du H."/>
            <person name="Edwards J."/>
            <person name="Fryman J."/>
            <person name="Haakensen B."/>
            <person name="Lamar E."/>
            <person name="Latreille P."/>
            <person name="Leonard S."/>
            <person name="Meyer R."/>
            <person name="Mulvaney E."/>
            <person name="Ozersky P."/>
            <person name="Riley A."/>
            <person name="Strowmatt C."/>
            <person name="Wagner-McPherson C."/>
            <person name="Wollam A."/>
            <person name="Yoakum M."/>
            <person name="Bell M."/>
            <person name="Dedhia N."/>
            <person name="Parnell L."/>
            <person name="Shah R."/>
            <person name="Rodriguez M."/>
            <person name="Hoon See L."/>
            <person name="Vil D."/>
            <person name="Baker J."/>
            <person name="Kirchoff K."/>
            <person name="Toth K."/>
            <person name="King L."/>
            <person name="Bahret A."/>
            <person name="Miller B."/>
            <person name="Marra M.A."/>
            <person name="Martienssen R."/>
            <person name="McCombie W.R."/>
            <person name="Wilson R.K."/>
            <person name="Murphy G."/>
            <person name="Bancroft I."/>
            <person name="Volckaert G."/>
            <person name="Wambutt R."/>
            <person name="Duesterhoeft A."/>
            <person name="Stiekema W."/>
            <person name="Pohl T."/>
            <person name="Entian K.-D."/>
            <person name="Terryn N."/>
            <person name="Hartley N."/>
            <person name="Bent E."/>
            <person name="Johnson S."/>
            <person name="Langham S.-A."/>
            <person name="McCullagh B."/>
            <person name="Robben J."/>
            <person name="Grymonprez B."/>
            <person name="Zimmermann W."/>
            <person name="Ramsperger U."/>
            <person name="Wedler H."/>
            <person name="Balke K."/>
            <person name="Wedler E."/>
            <person name="Peters S."/>
            <person name="van Staveren M."/>
            <person name="Dirkse W."/>
            <person name="Mooijman P."/>
            <person name="Klein Lankhorst R."/>
            <person name="Weitzenegger T."/>
            <person name="Bothe G."/>
            <person name="Rose M."/>
            <person name="Hauf J."/>
            <person name="Berneiser S."/>
            <person name="Hempel S."/>
            <person name="Feldpausch M."/>
            <person name="Lamberth S."/>
            <person name="Villarroel R."/>
            <person name="Gielen J."/>
            <person name="Ardiles W."/>
            <person name="Bents O."/>
            <person name="Lemcke K."/>
            <person name="Kolesov G."/>
            <person name="Mayer K.F.X."/>
            <person name="Rudd S."/>
            <person name="Schoof H."/>
            <person name="Schueller C."/>
            <person name="Zaccaria P."/>
            <person name="Mewes H.-W."/>
            <person name="Bevan M."/>
            <person name="Fransz P.F."/>
        </authorList>
    </citation>
    <scope>NUCLEOTIDE SEQUENCE [LARGE SCALE GENOMIC DNA]</scope>
    <source>
        <strain>cv. Columbia</strain>
    </source>
</reference>
<reference key="2">
    <citation type="journal article" date="2017" name="Plant J.">
        <title>Araport11: a complete reannotation of the Arabidopsis thaliana reference genome.</title>
        <authorList>
            <person name="Cheng C.Y."/>
            <person name="Krishnakumar V."/>
            <person name="Chan A.P."/>
            <person name="Thibaud-Nissen F."/>
            <person name="Schobel S."/>
            <person name="Town C.D."/>
        </authorList>
    </citation>
    <scope>GENOME REANNOTATION</scope>
    <source>
        <strain>cv. Columbia</strain>
    </source>
</reference>
<reference key="3">
    <citation type="journal article" date="2003" name="Science">
        <title>Empirical analysis of transcriptional activity in the Arabidopsis genome.</title>
        <authorList>
            <person name="Yamada K."/>
            <person name="Lim J."/>
            <person name="Dale J.M."/>
            <person name="Chen H."/>
            <person name="Shinn P."/>
            <person name="Palm C.J."/>
            <person name="Southwick A.M."/>
            <person name="Wu H.C."/>
            <person name="Kim C.J."/>
            <person name="Nguyen M."/>
            <person name="Pham P.K."/>
            <person name="Cheuk R.F."/>
            <person name="Karlin-Newmann G."/>
            <person name="Liu S.X."/>
            <person name="Lam B."/>
            <person name="Sakano H."/>
            <person name="Wu T."/>
            <person name="Yu G."/>
            <person name="Miranda M."/>
            <person name="Quach H.L."/>
            <person name="Tripp M."/>
            <person name="Chang C.H."/>
            <person name="Lee J.M."/>
            <person name="Toriumi M.J."/>
            <person name="Chan M.M."/>
            <person name="Tang C.C."/>
            <person name="Onodera C.S."/>
            <person name="Deng J.M."/>
            <person name="Akiyama K."/>
            <person name="Ansari Y."/>
            <person name="Arakawa T."/>
            <person name="Banh J."/>
            <person name="Banno F."/>
            <person name="Bowser L."/>
            <person name="Brooks S.Y."/>
            <person name="Carninci P."/>
            <person name="Chao Q."/>
            <person name="Choy N."/>
            <person name="Enju A."/>
            <person name="Goldsmith A.D."/>
            <person name="Gurjal M."/>
            <person name="Hansen N.F."/>
            <person name="Hayashizaki Y."/>
            <person name="Johnson-Hopson C."/>
            <person name="Hsuan V.W."/>
            <person name="Iida K."/>
            <person name="Karnes M."/>
            <person name="Khan S."/>
            <person name="Koesema E."/>
            <person name="Ishida J."/>
            <person name="Jiang P.X."/>
            <person name="Jones T."/>
            <person name="Kawai J."/>
            <person name="Kamiya A."/>
            <person name="Meyers C."/>
            <person name="Nakajima M."/>
            <person name="Narusaka M."/>
            <person name="Seki M."/>
            <person name="Sakurai T."/>
            <person name="Satou M."/>
            <person name="Tamse R."/>
            <person name="Vaysberg M."/>
            <person name="Wallender E.K."/>
            <person name="Wong C."/>
            <person name="Yamamura Y."/>
            <person name="Yuan S."/>
            <person name="Shinozaki K."/>
            <person name="Davis R.W."/>
            <person name="Theologis A."/>
            <person name="Ecker J.R."/>
        </authorList>
    </citation>
    <scope>NUCLEOTIDE SEQUENCE [LARGE SCALE MRNA]</scope>
    <source>
        <strain>cv. Columbia</strain>
    </source>
</reference>
<reference key="4">
    <citation type="journal article" date="2001" name="Plant Physiol.">
        <title>The organization of cytoplasmic ribosomal protein genes in the Arabidopsis genome.</title>
        <authorList>
            <person name="Barakat A."/>
            <person name="Szick-Miranda K."/>
            <person name="Chang I.-F."/>
            <person name="Guyot R."/>
            <person name="Blanc G."/>
            <person name="Cooke R."/>
            <person name="Delseny M."/>
            <person name="Bailey-Serres J."/>
        </authorList>
    </citation>
    <scope>GENE FAMILY ORGANIZATION</scope>
    <scope>NOMENCLATURE</scope>
</reference>
<reference key="5">
    <citation type="journal article" date="2023" name="Plant Cell">
        <title>An updated nomenclature for plant ribosomal protein genes.</title>
        <authorList>
            <person name="Scarpin M.R."/>
            <person name="Busche M."/>
            <person name="Martinez R.E."/>
            <person name="Harper L.C."/>
            <person name="Reiser L."/>
            <person name="Szakonyi D."/>
            <person name="Merchante C."/>
            <person name="Lan T."/>
            <person name="Xiong W."/>
            <person name="Mo B."/>
            <person name="Tang G."/>
            <person name="Chen X."/>
            <person name="Bailey-Serres J."/>
            <person name="Browning K.S."/>
            <person name="Brunkard J.O."/>
        </authorList>
    </citation>
    <scope>NOMENCLATURE</scope>
</reference>
<keyword id="KW-0963">Cytoplasm</keyword>
<keyword id="KW-1185">Reference proteome</keyword>
<keyword id="KW-0687">Ribonucleoprotein</keyword>
<keyword id="KW-0689">Ribosomal protein</keyword>
<comment type="subcellular location">
    <subcellularLocation>
        <location>Cytoplasm</location>
    </subcellularLocation>
</comment>
<comment type="similarity">
    <text evidence="2">Belongs to the universal ribosomal protein uS19 family.</text>
</comment>
<evidence type="ECO:0000303" key="1">
    <source>
    </source>
</evidence>
<evidence type="ECO:0000305" key="2"/>